<proteinExistence type="inferred from homology"/>
<dbReference type="EMBL" id="CH408034">
    <property type="protein sequence ID" value="EAQ84862.1"/>
    <property type="molecule type" value="Genomic_DNA"/>
</dbReference>
<dbReference type="RefSeq" id="XP_001226803.1">
    <property type="nucleotide sequence ID" value="XM_001226802.1"/>
</dbReference>
<dbReference type="SMR" id="Q2GT28"/>
<dbReference type="FunCoup" id="Q2GT28">
    <property type="interactions" value="43"/>
</dbReference>
<dbReference type="STRING" id="306901.Q2GT28"/>
<dbReference type="GeneID" id="4395636"/>
<dbReference type="VEuPathDB" id="FungiDB:CHGG_08876"/>
<dbReference type="eggNOG" id="KOG0295">
    <property type="taxonomic scope" value="Eukaryota"/>
</dbReference>
<dbReference type="HOGENOM" id="CLU_000288_57_15_1"/>
<dbReference type="InParanoid" id="Q2GT28"/>
<dbReference type="OMA" id="RGTCLMT"/>
<dbReference type="OrthoDB" id="10264588at2759"/>
<dbReference type="Proteomes" id="UP000001056">
    <property type="component" value="Unassembled WGS sequence"/>
</dbReference>
<dbReference type="GO" id="GO:0005737">
    <property type="term" value="C:cytoplasm"/>
    <property type="evidence" value="ECO:0007669"/>
    <property type="project" value="UniProtKB-UniRule"/>
</dbReference>
<dbReference type="GO" id="GO:0005874">
    <property type="term" value="C:microtubule"/>
    <property type="evidence" value="ECO:0007669"/>
    <property type="project" value="UniProtKB-KW"/>
</dbReference>
<dbReference type="GO" id="GO:0005875">
    <property type="term" value="C:microtubule associated complex"/>
    <property type="evidence" value="ECO:0007669"/>
    <property type="project" value="UniProtKB-UniRule"/>
</dbReference>
<dbReference type="GO" id="GO:0000922">
    <property type="term" value="C:spindle pole"/>
    <property type="evidence" value="ECO:0007669"/>
    <property type="project" value="UniProtKB-SubCell"/>
</dbReference>
<dbReference type="GO" id="GO:1990234">
    <property type="term" value="C:transferase complex"/>
    <property type="evidence" value="ECO:0007669"/>
    <property type="project" value="UniProtKB-ARBA"/>
</dbReference>
<dbReference type="GO" id="GO:0070840">
    <property type="term" value="F:dynein complex binding"/>
    <property type="evidence" value="ECO:0007669"/>
    <property type="project" value="UniProtKB-UniRule"/>
</dbReference>
<dbReference type="GO" id="GO:0051301">
    <property type="term" value="P:cell division"/>
    <property type="evidence" value="ECO:0007669"/>
    <property type="project" value="UniProtKB-KW"/>
</dbReference>
<dbReference type="GO" id="GO:0000132">
    <property type="term" value="P:establishment of mitotic spindle orientation"/>
    <property type="evidence" value="ECO:0007669"/>
    <property type="project" value="UniProtKB-UniRule"/>
</dbReference>
<dbReference type="GO" id="GO:0051012">
    <property type="term" value="P:microtubule sliding"/>
    <property type="evidence" value="ECO:0007669"/>
    <property type="project" value="UniProtKB-UniRule"/>
</dbReference>
<dbReference type="CDD" id="cd00200">
    <property type="entry name" value="WD40"/>
    <property type="match status" value="1"/>
</dbReference>
<dbReference type="FunFam" id="2.130.10.10:FF:000342">
    <property type="entry name" value="Nuclear distribution protein PAC1"/>
    <property type="match status" value="1"/>
</dbReference>
<dbReference type="FunFam" id="1.20.960.30:FF:000002">
    <property type="entry name" value="Platelet-activating factor acetylhydrolase ib"/>
    <property type="match status" value="1"/>
</dbReference>
<dbReference type="Gene3D" id="1.20.960.30">
    <property type="match status" value="1"/>
</dbReference>
<dbReference type="Gene3D" id="2.130.10.10">
    <property type="entry name" value="YVTN repeat-like/Quinoprotein amine dehydrogenase"/>
    <property type="match status" value="1"/>
</dbReference>
<dbReference type="HAMAP" id="MF_03141">
    <property type="entry name" value="lis1"/>
    <property type="match status" value="1"/>
</dbReference>
<dbReference type="InterPro" id="IPR017252">
    <property type="entry name" value="Dynein_regulator_LIS1"/>
</dbReference>
<dbReference type="InterPro" id="IPR020472">
    <property type="entry name" value="G-protein_beta_WD-40_rep"/>
</dbReference>
<dbReference type="InterPro" id="IPR037190">
    <property type="entry name" value="LIS1_N"/>
</dbReference>
<dbReference type="InterPro" id="IPR006594">
    <property type="entry name" value="LisH"/>
</dbReference>
<dbReference type="InterPro" id="IPR056795">
    <property type="entry name" value="PAC1-like_LisH-like_dom"/>
</dbReference>
<dbReference type="InterPro" id="IPR015943">
    <property type="entry name" value="WD40/YVTN_repeat-like_dom_sf"/>
</dbReference>
<dbReference type="InterPro" id="IPR019775">
    <property type="entry name" value="WD40_repeat_CS"/>
</dbReference>
<dbReference type="InterPro" id="IPR036322">
    <property type="entry name" value="WD40_repeat_dom_sf"/>
</dbReference>
<dbReference type="InterPro" id="IPR001680">
    <property type="entry name" value="WD40_rpt"/>
</dbReference>
<dbReference type="PANTHER" id="PTHR22847:SF637">
    <property type="entry name" value="WD REPEAT DOMAIN 5B"/>
    <property type="match status" value="1"/>
</dbReference>
<dbReference type="PANTHER" id="PTHR22847">
    <property type="entry name" value="WD40 REPEAT PROTEIN"/>
    <property type="match status" value="1"/>
</dbReference>
<dbReference type="Pfam" id="PF24951">
    <property type="entry name" value="LisH_PAC1"/>
    <property type="match status" value="1"/>
</dbReference>
<dbReference type="Pfam" id="PF00400">
    <property type="entry name" value="WD40"/>
    <property type="match status" value="6"/>
</dbReference>
<dbReference type="PIRSF" id="PIRSF037647">
    <property type="entry name" value="Dynein_regulator_Lis1"/>
    <property type="match status" value="1"/>
</dbReference>
<dbReference type="PRINTS" id="PR00320">
    <property type="entry name" value="GPROTEINBRPT"/>
</dbReference>
<dbReference type="SMART" id="SM00320">
    <property type="entry name" value="WD40"/>
    <property type="match status" value="7"/>
</dbReference>
<dbReference type="SUPFAM" id="SSF109925">
    <property type="entry name" value="Lissencephaly-1 protein (Lis-1, PAF-AH alpha) N-terminal domain"/>
    <property type="match status" value="1"/>
</dbReference>
<dbReference type="SUPFAM" id="SSF50978">
    <property type="entry name" value="WD40 repeat-like"/>
    <property type="match status" value="1"/>
</dbReference>
<dbReference type="PROSITE" id="PS50896">
    <property type="entry name" value="LISH"/>
    <property type="match status" value="1"/>
</dbReference>
<dbReference type="PROSITE" id="PS00678">
    <property type="entry name" value="WD_REPEATS_1"/>
    <property type="match status" value="3"/>
</dbReference>
<dbReference type="PROSITE" id="PS50082">
    <property type="entry name" value="WD_REPEATS_2"/>
    <property type="match status" value="6"/>
</dbReference>
<dbReference type="PROSITE" id="PS50294">
    <property type="entry name" value="WD_REPEATS_REGION"/>
    <property type="match status" value="1"/>
</dbReference>
<protein>
    <recommendedName>
        <fullName evidence="1">Nuclear distribution protein PAC1-2</fullName>
    </recommendedName>
    <alternativeName>
        <fullName evidence="1">Lissencephaly-1 homolog 2</fullName>
        <shortName evidence="1">LIS-1 2</shortName>
    </alternativeName>
    <alternativeName>
        <fullName evidence="1">nudF homolog 2</fullName>
    </alternativeName>
</protein>
<feature type="chain" id="PRO_0000405077" description="Nuclear distribution protein PAC1-2">
    <location>
        <begin position="1"/>
        <end position="453"/>
    </location>
</feature>
<feature type="domain" description="LisH" evidence="1">
    <location>
        <begin position="9"/>
        <end position="41"/>
    </location>
</feature>
<feature type="repeat" description="WD 1">
    <location>
        <begin position="113"/>
        <end position="154"/>
    </location>
</feature>
<feature type="repeat" description="WD 2">
    <location>
        <begin position="156"/>
        <end position="196"/>
    </location>
</feature>
<feature type="repeat" description="WD 3">
    <location>
        <begin position="200"/>
        <end position="243"/>
    </location>
</feature>
<feature type="repeat" description="WD 4">
    <location>
        <begin position="246"/>
        <end position="285"/>
    </location>
</feature>
<feature type="repeat" description="WD 5">
    <location>
        <begin position="290"/>
        <end position="350"/>
    </location>
</feature>
<feature type="repeat" description="WD 6">
    <location>
        <begin position="352"/>
        <end position="391"/>
    </location>
</feature>
<feature type="repeat" description="WD 7">
    <location>
        <begin position="396"/>
        <end position="448"/>
    </location>
</feature>
<feature type="region of interest" description="Disordered" evidence="2">
    <location>
        <begin position="84"/>
        <end position="108"/>
    </location>
</feature>
<feature type="coiled-coil region" evidence="1">
    <location>
        <begin position="63"/>
        <end position="87"/>
    </location>
</feature>
<organism>
    <name type="scientific">Chaetomium globosum (strain ATCC 6205 / CBS 148.51 / DSM 1962 / NBRC 6347 / NRRL 1970)</name>
    <name type="common">Soil fungus</name>
    <dbReference type="NCBI Taxonomy" id="306901"/>
    <lineage>
        <taxon>Eukaryota</taxon>
        <taxon>Fungi</taxon>
        <taxon>Dikarya</taxon>
        <taxon>Ascomycota</taxon>
        <taxon>Pezizomycotina</taxon>
        <taxon>Sordariomycetes</taxon>
        <taxon>Sordariomycetidae</taxon>
        <taxon>Sordariales</taxon>
        <taxon>Chaetomiaceae</taxon>
        <taxon>Chaetomium</taxon>
    </lineage>
</organism>
<accession>Q2GT28</accession>
<keyword id="KW-0131">Cell cycle</keyword>
<keyword id="KW-0132">Cell division</keyword>
<keyword id="KW-0175">Coiled coil</keyword>
<keyword id="KW-0963">Cytoplasm</keyword>
<keyword id="KW-0206">Cytoskeleton</keyword>
<keyword id="KW-0493">Microtubule</keyword>
<keyword id="KW-0498">Mitosis</keyword>
<keyword id="KW-1185">Reference proteome</keyword>
<keyword id="KW-0677">Repeat</keyword>
<keyword id="KW-0813">Transport</keyword>
<keyword id="KW-0853">WD repeat</keyword>
<evidence type="ECO:0000255" key="1">
    <source>
        <dbReference type="HAMAP-Rule" id="MF_03141"/>
    </source>
</evidence>
<evidence type="ECO:0000256" key="2">
    <source>
        <dbReference type="SAM" id="MobiDB-lite"/>
    </source>
</evidence>
<reference key="1">
    <citation type="journal article" date="2015" name="Genome Announc.">
        <title>Draft genome sequence of the cellulolytic fungus Chaetomium globosum.</title>
        <authorList>
            <person name="Cuomo C.A."/>
            <person name="Untereiner W.A."/>
            <person name="Ma L.-J."/>
            <person name="Grabherr M."/>
            <person name="Birren B.W."/>
        </authorList>
    </citation>
    <scope>NUCLEOTIDE SEQUENCE [LARGE SCALE GENOMIC DNA]</scope>
    <source>
        <strain>ATCC 6205 / CBS 148.51 / DSM 1962 / NBRC 6347 / NRRL 1970</strain>
    </source>
</reference>
<comment type="function">
    <text evidence="1">Positively regulates the activity of the minus-end directed microtubule motor protein dynein. May enhance dynein-mediated microtubule sliding by targeting dynein to the microtubule plus end. Required for nuclear migration during vegetative growth as well as development. Required for retrograde early endosome (EE) transport from the hyphal tip. Required for localization of dynein to the mitotic spindle poles. Recruits additional proteins to the dynein complex at SPBs.</text>
</comment>
<comment type="subunit">
    <text evidence="1">Self-associates. Interacts with NDL1 and dynein.</text>
</comment>
<comment type="subcellular location">
    <subcellularLocation>
        <location evidence="1">Cytoplasm</location>
        <location evidence="1">Cytoskeleton</location>
    </subcellularLocation>
    <subcellularLocation>
        <location evidence="1">Cytoplasm</location>
        <location evidence="1">Cytoskeleton</location>
        <location evidence="1">Spindle pole</location>
    </subcellularLocation>
    <text evidence="1">Localizes to the plus ends of microtubules at the hyphal tip and the mitotic spindle poles.</text>
</comment>
<comment type="domain">
    <text evidence="1">Dimerization mediated by the LisH domain may be required to activate dynein.</text>
</comment>
<comment type="similarity">
    <text evidence="1">Belongs to the WD repeat LIS1/nudF family.</text>
</comment>
<gene>
    <name evidence="1" type="primary">PAC1-2</name>
    <name evidence="1" type="synonym">LIS1-2</name>
    <name type="ORF">CHGG_08876</name>
</gene>
<name>LIS12_CHAGB</name>
<sequence>MNPVLTSRQADELHKSIVAYLTANNLSTTAATLREELSLGEDVFDAEKTAKYQSLLEKKWTSVVRLQKKVMDLESRSVALQSELEHSTPASLSKRKDPTSWLPRSPPRHSLESHQAIVNCLAFHPVFSSLASGSDDSTVKIWDWELGELERTLKGHTRAVLDIDFGGPRGAILLASCSSDSTIKLWDPADEYKNTRTLTGHDHSVSAVRFVTSRPRSENLLVSASGDKTLKVWDITAGYCIKTLQGHTGWVRDVVPSLDGRFLLSSGTDQTARLWDISAADPESKLVMVGHENGIRCCAFAPPASYVHMAALAGLKKPPPSTSTAEFMATGSRDKTIKLWNSTGTCIKTLVGHDNWVSGLVFHPGGKYLLSVADDKTLRCWDLGDDGRCVKVLADAHGQFITCLRWAPGIVKKGADQGAEDTGPLEKTAPSEVQIRCLVATTSVDKVVRIFAD</sequence>